<keyword id="KW-0030">Aminoacyl-tRNA synthetase</keyword>
<keyword id="KW-0067">ATP-binding</keyword>
<keyword id="KW-0963">Cytoplasm</keyword>
<keyword id="KW-0436">Ligase</keyword>
<keyword id="KW-0547">Nucleotide-binding</keyword>
<keyword id="KW-0648">Protein biosynthesis</keyword>
<reference key="1">
    <citation type="journal article" date="2009" name="ISME J.">
        <title>The genome sequence of the psychrophilic archaeon, Methanococcoides burtonii: the role of genome evolution in cold adaptation.</title>
        <authorList>
            <person name="Allen M.A."/>
            <person name="Lauro F.M."/>
            <person name="Williams T.J."/>
            <person name="Burg D."/>
            <person name="Siddiqui K.S."/>
            <person name="De Francisci D."/>
            <person name="Chong K.W."/>
            <person name="Pilak O."/>
            <person name="Chew H.H."/>
            <person name="De Maere M.Z."/>
            <person name="Ting L."/>
            <person name="Katrib M."/>
            <person name="Ng C."/>
            <person name="Sowers K.R."/>
            <person name="Galperin M.Y."/>
            <person name="Anderson I.J."/>
            <person name="Ivanova N."/>
            <person name="Dalin E."/>
            <person name="Martinez M."/>
            <person name="Lapidus A."/>
            <person name="Hauser L."/>
            <person name="Land M."/>
            <person name="Thomas T."/>
            <person name="Cavicchioli R."/>
        </authorList>
    </citation>
    <scope>NUCLEOTIDE SEQUENCE [LARGE SCALE GENOMIC DNA]</scope>
    <source>
        <strain>DSM 6242 / NBRC 107633 / OCM 468 / ACE-M</strain>
    </source>
</reference>
<protein>
    <recommendedName>
        <fullName evidence="1">Arginine--tRNA ligase</fullName>
        <ecNumber evidence="1">6.1.1.19</ecNumber>
    </recommendedName>
    <alternativeName>
        <fullName evidence="1">Arginyl-tRNA synthetase</fullName>
        <shortName evidence="1">ArgRS</shortName>
    </alternativeName>
</protein>
<organism>
    <name type="scientific">Methanococcoides burtonii (strain DSM 6242 / NBRC 107633 / OCM 468 / ACE-M)</name>
    <dbReference type="NCBI Taxonomy" id="259564"/>
    <lineage>
        <taxon>Archaea</taxon>
        <taxon>Methanobacteriati</taxon>
        <taxon>Methanobacteriota</taxon>
        <taxon>Stenosarchaea group</taxon>
        <taxon>Methanomicrobia</taxon>
        <taxon>Methanosarcinales</taxon>
        <taxon>Methanosarcinaceae</taxon>
        <taxon>Methanococcoides</taxon>
    </lineage>
</organism>
<evidence type="ECO:0000255" key="1">
    <source>
        <dbReference type="HAMAP-Rule" id="MF_00123"/>
    </source>
</evidence>
<sequence length="567" mass="62992">MFLDFIDQVTSILNDAVSSAGFEADDMELGPSQHADLSSRIAFRLASVAKQSPKDVAEKIAGEIVIPKGSFVEKVEALGPYLNIWAGRNFIEGTVLAIREQKEAFGGNFSEGRILLEHTSANPNGPLHVGHIRNSIIGDTLGRILKRAGYDVELHYYVNDMGRQIAIVSWALGYFEFDESSKPDHAIADVYIKANAELNAHPEKVAEIDKLMQLVEKGDAATIETFDKAVDLAVSGIKETLKKMNVAHDEFPKESSFIRSGDVSRIIEEIKATGRTEIDNGALVVNLQDYGFKKTLVIQRTDGTSLYTTRDLAYHEWKGERADRIIDVFGADHKLISGQLKATLNAIGKKEPEFVIFEFVSLPEGSMSTRSGKFISADDLLDQIKTQAYEEVDKRRPDMPDDFKATVAEIVGIGAVRYDIVKVSPEKSTVFDWKEALDFEKQGGPFIQYSHARACSILQKAKDEGLWSSEEPINTTLLVEDSEVSLIKKMAMFDNMLDQCAKELRPHTFAIYARELADAFNQFYRFVSVLNAEDEQLRSSRIALVDCARMVLANTLDTLGLGAPESM</sequence>
<dbReference type="EC" id="6.1.1.19" evidence="1"/>
<dbReference type="EMBL" id="CP000300">
    <property type="protein sequence ID" value="ABE52629.1"/>
    <property type="molecule type" value="Genomic_DNA"/>
</dbReference>
<dbReference type="RefSeq" id="WP_011499772.1">
    <property type="nucleotide sequence ID" value="NC_007955.1"/>
</dbReference>
<dbReference type="SMR" id="Q12V97"/>
<dbReference type="STRING" id="259564.Mbur_1739"/>
<dbReference type="GeneID" id="3997299"/>
<dbReference type="KEGG" id="mbu:Mbur_1739"/>
<dbReference type="HOGENOM" id="CLU_006406_6_1_2"/>
<dbReference type="OrthoDB" id="372102at2157"/>
<dbReference type="Proteomes" id="UP000001979">
    <property type="component" value="Chromosome"/>
</dbReference>
<dbReference type="GO" id="GO:0005737">
    <property type="term" value="C:cytoplasm"/>
    <property type="evidence" value="ECO:0007669"/>
    <property type="project" value="UniProtKB-SubCell"/>
</dbReference>
<dbReference type="GO" id="GO:0004814">
    <property type="term" value="F:arginine-tRNA ligase activity"/>
    <property type="evidence" value="ECO:0007669"/>
    <property type="project" value="UniProtKB-UniRule"/>
</dbReference>
<dbReference type="GO" id="GO:0005524">
    <property type="term" value="F:ATP binding"/>
    <property type="evidence" value="ECO:0007669"/>
    <property type="project" value="UniProtKB-UniRule"/>
</dbReference>
<dbReference type="GO" id="GO:0006420">
    <property type="term" value="P:arginyl-tRNA aminoacylation"/>
    <property type="evidence" value="ECO:0007669"/>
    <property type="project" value="UniProtKB-UniRule"/>
</dbReference>
<dbReference type="CDD" id="cd07956">
    <property type="entry name" value="Anticodon_Ia_Arg"/>
    <property type="match status" value="1"/>
</dbReference>
<dbReference type="CDD" id="cd00671">
    <property type="entry name" value="ArgRS_core"/>
    <property type="match status" value="1"/>
</dbReference>
<dbReference type="FunFam" id="1.10.730.10:FF:000006">
    <property type="entry name" value="Arginyl-tRNA synthetase 2, mitochondrial"/>
    <property type="match status" value="1"/>
</dbReference>
<dbReference type="Gene3D" id="3.30.1360.70">
    <property type="entry name" value="Arginyl tRNA synthetase N-terminal domain"/>
    <property type="match status" value="1"/>
</dbReference>
<dbReference type="Gene3D" id="3.40.50.620">
    <property type="entry name" value="HUPs"/>
    <property type="match status" value="1"/>
</dbReference>
<dbReference type="Gene3D" id="1.10.730.10">
    <property type="entry name" value="Isoleucyl-tRNA Synthetase, Domain 1"/>
    <property type="match status" value="1"/>
</dbReference>
<dbReference type="HAMAP" id="MF_00123">
    <property type="entry name" value="Arg_tRNA_synth"/>
    <property type="match status" value="1"/>
</dbReference>
<dbReference type="InterPro" id="IPR001412">
    <property type="entry name" value="aa-tRNA-synth_I_CS"/>
</dbReference>
<dbReference type="InterPro" id="IPR001278">
    <property type="entry name" value="Arg-tRNA-ligase"/>
</dbReference>
<dbReference type="InterPro" id="IPR005148">
    <property type="entry name" value="Arg-tRNA-synth_N"/>
</dbReference>
<dbReference type="InterPro" id="IPR036695">
    <property type="entry name" value="Arg-tRNA-synth_N_sf"/>
</dbReference>
<dbReference type="InterPro" id="IPR035684">
    <property type="entry name" value="ArgRS_core"/>
</dbReference>
<dbReference type="InterPro" id="IPR008909">
    <property type="entry name" value="DALR_anticod-bd"/>
</dbReference>
<dbReference type="InterPro" id="IPR014729">
    <property type="entry name" value="Rossmann-like_a/b/a_fold"/>
</dbReference>
<dbReference type="InterPro" id="IPR009080">
    <property type="entry name" value="tRNAsynth_Ia_anticodon-bd"/>
</dbReference>
<dbReference type="NCBIfam" id="TIGR00456">
    <property type="entry name" value="argS"/>
    <property type="match status" value="1"/>
</dbReference>
<dbReference type="PANTHER" id="PTHR11956:SF5">
    <property type="entry name" value="ARGININE--TRNA LIGASE, CYTOPLASMIC"/>
    <property type="match status" value="1"/>
</dbReference>
<dbReference type="PANTHER" id="PTHR11956">
    <property type="entry name" value="ARGINYL-TRNA SYNTHETASE"/>
    <property type="match status" value="1"/>
</dbReference>
<dbReference type="Pfam" id="PF03485">
    <property type="entry name" value="Arg_tRNA_synt_N"/>
    <property type="match status" value="1"/>
</dbReference>
<dbReference type="Pfam" id="PF05746">
    <property type="entry name" value="DALR_1"/>
    <property type="match status" value="1"/>
</dbReference>
<dbReference type="Pfam" id="PF00750">
    <property type="entry name" value="tRNA-synt_1d"/>
    <property type="match status" value="1"/>
</dbReference>
<dbReference type="PRINTS" id="PR01038">
    <property type="entry name" value="TRNASYNTHARG"/>
</dbReference>
<dbReference type="SMART" id="SM01016">
    <property type="entry name" value="Arg_tRNA_synt_N"/>
    <property type="match status" value="1"/>
</dbReference>
<dbReference type="SMART" id="SM00836">
    <property type="entry name" value="DALR_1"/>
    <property type="match status" value="1"/>
</dbReference>
<dbReference type="SUPFAM" id="SSF47323">
    <property type="entry name" value="Anticodon-binding domain of a subclass of class I aminoacyl-tRNA synthetases"/>
    <property type="match status" value="1"/>
</dbReference>
<dbReference type="SUPFAM" id="SSF55190">
    <property type="entry name" value="Arginyl-tRNA synthetase (ArgRS), N-terminal 'additional' domain"/>
    <property type="match status" value="1"/>
</dbReference>
<dbReference type="SUPFAM" id="SSF52374">
    <property type="entry name" value="Nucleotidylyl transferase"/>
    <property type="match status" value="1"/>
</dbReference>
<dbReference type="PROSITE" id="PS00178">
    <property type="entry name" value="AA_TRNA_LIGASE_I"/>
    <property type="match status" value="1"/>
</dbReference>
<name>SYR_METBU</name>
<gene>
    <name evidence="1" type="primary">argS</name>
    <name type="ordered locus">Mbur_1739</name>
</gene>
<proteinExistence type="inferred from homology"/>
<feature type="chain" id="PRO_1000018060" description="Arginine--tRNA ligase">
    <location>
        <begin position="1"/>
        <end position="567"/>
    </location>
</feature>
<feature type="short sequence motif" description="'HIGH' region">
    <location>
        <begin position="121"/>
        <end position="131"/>
    </location>
</feature>
<accession>Q12V97</accession>
<comment type="catalytic activity">
    <reaction evidence="1">
        <text>tRNA(Arg) + L-arginine + ATP = L-arginyl-tRNA(Arg) + AMP + diphosphate</text>
        <dbReference type="Rhea" id="RHEA:20301"/>
        <dbReference type="Rhea" id="RHEA-COMP:9658"/>
        <dbReference type="Rhea" id="RHEA-COMP:9673"/>
        <dbReference type="ChEBI" id="CHEBI:30616"/>
        <dbReference type="ChEBI" id="CHEBI:32682"/>
        <dbReference type="ChEBI" id="CHEBI:33019"/>
        <dbReference type="ChEBI" id="CHEBI:78442"/>
        <dbReference type="ChEBI" id="CHEBI:78513"/>
        <dbReference type="ChEBI" id="CHEBI:456215"/>
        <dbReference type="EC" id="6.1.1.19"/>
    </reaction>
</comment>
<comment type="subcellular location">
    <subcellularLocation>
        <location evidence="1">Cytoplasm</location>
    </subcellularLocation>
</comment>
<comment type="similarity">
    <text evidence="1">Belongs to the class-I aminoacyl-tRNA synthetase family.</text>
</comment>